<organism>
    <name type="scientific">Neurospora crassa (strain ATCC 24698 / 74-OR23-1A / CBS 708.71 / DSM 1257 / FGSC 987)</name>
    <dbReference type="NCBI Taxonomy" id="367110"/>
    <lineage>
        <taxon>Eukaryota</taxon>
        <taxon>Fungi</taxon>
        <taxon>Dikarya</taxon>
        <taxon>Ascomycota</taxon>
        <taxon>Pezizomycotina</taxon>
        <taxon>Sordariomycetes</taxon>
        <taxon>Sordariomycetidae</taxon>
        <taxon>Sordariales</taxon>
        <taxon>Sordariaceae</taxon>
        <taxon>Neurospora</taxon>
    </lineage>
</organism>
<name>GPA3_NEUCR</name>
<gene>
    <name type="primary">gna-3</name>
    <name type="ORF">NCU05206</name>
</gene>
<proteinExistence type="inferred from homology"/>
<sequence length="356" mass="41129">MGACMSKNDEETEQKKRSQKIDRDLEEDSKKLRKECKILLLGSGESGKSTIVKQMKIIHLKGYSDEELTNYRPTVYKNLLECAKAVVNAMHQFDIQPADPSLRPYVEFLQDYNMEGCPPGQSIDPKVGTAIQALWNDPAKEQLMERQTEFYLMDSAEYFFTEVMRIVAEDYRPNEMDVLRARTKTTGIYETRFKMGQLSIHMFDVGGQRSERKKWIHCFENVTSIIFCVALSEYDQVLLEESSQNRMMESLLLFDSVVNSRWFMRTSIILFLNKVDIFKQKLGRSPLGNYFPDYSGGNDVNKAAKYLLWRFNQVNRAHLNLYPHLTQATDTSNIRLVFAAVKETILNNALKDSGIL</sequence>
<feature type="initiator methionine" description="Removed" evidence="2">
    <location>
        <position position="1"/>
    </location>
</feature>
<feature type="chain" id="PRO_0000203607" description="Guanine nucleotide-binding protein alpha-3 subunit">
    <location>
        <begin position="2"/>
        <end position="356"/>
    </location>
</feature>
<feature type="domain" description="G-alpha" evidence="3">
    <location>
        <begin position="34"/>
        <end position="356"/>
    </location>
</feature>
<feature type="region of interest" description="Disordered" evidence="4">
    <location>
        <begin position="1"/>
        <end position="26"/>
    </location>
</feature>
<feature type="region of interest" description="G1 motif" evidence="3">
    <location>
        <begin position="37"/>
        <end position="50"/>
    </location>
</feature>
<feature type="region of interest" description="G2 motif" evidence="3">
    <location>
        <begin position="177"/>
        <end position="185"/>
    </location>
</feature>
<feature type="region of interest" description="G3 motif" evidence="3">
    <location>
        <begin position="200"/>
        <end position="209"/>
    </location>
</feature>
<feature type="region of interest" description="G4 motif" evidence="3">
    <location>
        <begin position="269"/>
        <end position="276"/>
    </location>
</feature>
<feature type="region of interest" description="G5 motif" evidence="3">
    <location>
        <begin position="326"/>
        <end position="331"/>
    </location>
</feature>
<feature type="compositionally biased region" description="Basic and acidic residues" evidence="4">
    <location>
        <begin position="7"/>
        <end position="23"/>
    </location>
</feature>
<feature type="binding site" evidence="1">
    <location>
        <begin position="42"/>
        <end position="49"/>
    </location>
    <ligand>
        <name>GTP</name>
        <dbReference type="ChEBI" id="CHEBI:37565"/>
    </ligand>
</feature>
<feature type="binding site" evidence="1">
    <location>
        <position position="49"/>
    </location>
    <ligand>
        <name>Mg(2+)</name>
        <dbReference type="ChEBI" id="CHEBI:18420"/>
    </ligand>
</feature>
<feature type="binding site" evidence="1">
    <location>
        <begin position="179"/>
        <end position="185"/>
    </location>
    <ligand>
        <name>GTP</name>
        <dbReference type="ChEBI" id="CHEBI:37565"/>
    </ligand>
</feature>
<feature type="binding site" evidence="1">
    <location>
        <position position="185"/>
    </location>
    <ligand>
        <name>Mg(2+)</name>
        <dbReference type="ChEBI" id="CHEBI:18420"/>
    </ligand>
</feature>
<feature type="binding site" evidence="1">
    <location>
        <begin position="204"/>
        <end position="208"/>
    </location>
    <ligand>
        <name>GTP</name>
        <dbReference type="ChEBI" id="CHEBI:37565"/>
    </ligand>
</feature>
<feature type="binding site" evidence="1">
    <location>
        <begin position="273"/>
        <end position="276"/>
    </location>
    <ligand>
        <name>GTP</name>
        <dbReference type="ChEBI" id="CHEBI:37565"/>
    </ligand>
</feature>
<feature type="binding site" evidence="1">
    <location>
        <position position="328"/>
    </location>
    <ligand>
        <name>GTP</name>
        <dbReference type="ChEBI" id="CHEBI:37565"/>
    </ligand>
</feature>
<feature type="lipid moiety-binding region" description="N-myristoyl glycine" evidence="2">
    <location>
        <position position="2"/>
    </location>
</feature>
<feature type="lipid moiety-binding region" description="S-palmitoyl cysteine" evidence="2">
    <location>
        <position position="4"/>
    </location>
</feature>
<keyword id="KW-0183">Conidiation</keyword>
<keyword id="KW-0342">GTP-binding</keyword>
<keyword id="KW-0449">Lipoprotein</keyword>
<keyword id="KW-0460">Magnesium</keyword>
<keyword id="KW-0479">Metal-binding</keyword>
<keyword id="KW-0519">Myristate</keyword>
<keyword id="KW-0547">Nucleotide-binding</keyword>
<keyword id="KW-0564">Palmitate</keyword>
<keyword id="KW-1185">Reference proteome</keyword>
<keyword id="KW-0749">Sporulation</keyword>
<keyword id="KW-0807">Transducer</keyword>
<evidence type="ECO:0000250" key="1"/>
<evidence type="ECO:0000255" key="2"/>
<evidence type="ECO:0000255" key="3">
    <source>
        <dbReference type="PROSITE-ProRule" id="PRU01230"/>
    </source>
</evidence>
<evidence type="ECO:0000256" key="4">
    <source>
        <dbReference type="SAM" id="MobiDB-lite"/>
    </source>
</evidence>
<evidence type="ECO:0000305" key="5"/>
<dbReference type="EMBL" id="AF281862">
    <property type="protein sequence ID" value="AAG21364.1"/>
    <property type="molecule type" value="Genomic_DNA"/>
</dbReference>
<dbReference type="EMBL" id="CM002239">
    <property type="protein sequence ID" value="EAA32969.2"/>
    <property type="status" value="ALT_INIT"/>
    <property type="molecule type" value="Genomic_DNA"/>
</dbReference>
<dbReference type="RefSeq" id="XP_962205.2">
    <property type="nucleotide sequence ID" value="XM_957112.2"/>
</dbReference>
<dbReference type="SMR" id="Q9HFW7"/>
<dbReference type="FunCoup" id="Q9HFW7">
    <property type="interactions" value="305"/>
</dbReference>
<dbReference type="STRING" id="367110.Q9HFW7"/>
<dbReference type="PaxDb" id="5141-EFNCRP00000004936"/>
<dbReference type="EnsemblFungi" id="EAA32969">
    <property type="protein sequence ID" value="EAA32969"/>
    <property type="gene ID" value="NCU05206"/>
</dbReference>
<dbReference type="GeneID" id="3878344"/>
<dbReference type="KEGG" id="ncr:NCU05206"/>
<dbReference type="HOGENOM" id="CLU_014184_6_0_1"/>
<dbReference type="InParanoid" id="Q9HFW7"/>
<dbReference type="OMA" id="FMAIQAM"/>
<dbReference type="OrthoDB" id="5817230at2759"/>
<dbReference type="BRENDA" id="3.6.5.1">
    <property type="organism ID" value="3627"/>
</dbReference>
<dbReference type="Proteomes" id="UP000001805">
    <property type="component" value="Chromosome 4, Linkage Group IV"/>
</dbReference>
<dbReference type="GO" id="GO:0005737">
    <property type="term" value="C:cytoplasm"/>
    <property type="evidence" value="ECO:0000318"/>
    <property type="project" value="GO_Central"/>
</dbReference>
<dbReference type="GO" id="GO:0005834">
    <property type="term" value="C:heterotrimeric G-protein complex"/>
    <property type="evidence" value="ECO:0000318"/>
    <property type="project" value="GO_Central"/>
</dbReference>
<dbReference type="GO" id="GO:0001664">
    <property type="term" value="F:G protein-coupled receptor binding"/>
    <property type="evidence" value="ECO:0000318"/>
    <property type="project" value="GO_Central"/>
</dbReference>
<dbReference type="GO" id="GO:0031683">
    <property type="term" value="F:G-protein beta/gamma-subunit complex binding"/>
    <property type="evidence" value="ECO:0000318"/>
    <property type="project" value="GO_Central"/>
</dbReference>
<dbReference type="GO" id="GO:0005525">
    <property type="term" value="F:GTP binding"/>
    <property type="evidence" value="ECO:0007669"/>
    <property type="project" value="UniProtKB-KW"/>
</dbReference>
<dbReference type="GO" id="GO:0003924">
    <property type="term" value="F:GTPase activity"/>
    <property type="evidence" value="ECO:0000318"/>
    <property type="project" value="GO_Central"/>
</dbReference>
<dbReference type="GO" id="GO:0046872">
    <property type="term" value="F:metal ion binding"/>
    <property type="evidence" value="ECO:0007669"/>
    <property type="project" value="UniProtKB-KW"/>
</dbReference>
<dbReference type="GO" id="GO:0007189">
    <property type="term" value="P:adenylate cyclase-activating G protein-coupled receptor signaling pathway"/>
    <property type="evidence" value="ECO:0000318"/>
    <property type="project" value="GO_Central"/>
</dbReference>
<dbReference type="GO" id="GO:0048315">
    <property type="term" value="P:conidium formation"/>
    <property type="evidence" value="ECO:0007669"/>
    <property type="project" value="UniProtKB-KW"/>
</dbReference>
<dbReference type="GO" id="GO:0030435">
    <property type="term" value="P:sporulation resulting in formation of a cellular spore"/>
    <property type="evidence" value="ECO:0007669"/>
    <property type="project" value="UniProtKB-KW"/>
</dbReference>
<dbReference type="CDD" id="cd00066">
    <property type="entry name" value="G-alpha"/>
    <property type="match status" value="1"/>
</dbReference>
<dbReference type="FunFam" id="1.10.400.10:FF:000007">
    <property type="entry name" value="Guanine nucleotide-binding protein subunit alpha"/>
    <property type="match status" value="1"/>
</dbReference>
<dbReference type="FunFam" id="3.40.50.300:FF:000181">
    <property type="entry name" value="Guanine nucleotide-binding protein subunit alpha"/>
    <property type="match status" value="1"/>
</dbReference>
<dbReference type="Gene3D" id="1.10.400.10">
    <property type="entry name" value="GI Alpha 1, domain 2-like"/>
    <property type="match status" value="1"/>
</dbReference>
<dbReference type="Gene3D" id="3.40.50.300">
    <property type="entry name" value="P-loop containing nucleotide triphosphate hydrolases"/>
    <property type="match status" value="1"/>
</dbReference>
<dbReference type="InterPro" id="IPR002975">
    <property type="entry name" value="Fungi_Gprotein_alpha"/>
</dbReference>
<dbReference type="InterPro" id="IPR001019">
    <property type="entry name" value="Gprotein_alpha_su"/>
</dbReference>
<dbReference type="InterPro" id="IPR011025">
    <property type="entry name" value="GproteinA_insert"/>
</dbReference>
<dbReference type="InterPro" id="IPR027417">
    <property type="entry name" value="P-loop_NTPase"/>
</dbReference>
<dbReference type="PANTHER" id="PTHR10218">
    <property type="entry name" value="GTP-BINDING PROTEIN ALPHA SUBUNIT"/>
    <property type="match status" value="1"/>
</dbReference>
<dbReference type="PANTHER" id="PTHR10218:SF369">
    <property type="entry name" value="GUANINE NUCLEOTIDE-BINDING PROTEIN ALPHA-2 SUBUNIT"/>
    <property type="match status" value="1"/>
</dbReference>
<dbReference type="Pfam" id="PF00503">
    <property type="entry name" value="G-alpha"/>
    <property type="match status" value="1"/>
</dbReference>
<dbReference type="PRINTS" id="PR00318">
    <property type="entry name" value="GPROTEINA"/>
</dbReference>
<dbReference type="PRINTS" id="PR01241">
    <property type="entry name" value="GPROTEINAFNG"/>
</dbReference>
<dbReference type="SMART" id="SM00275">
    <property type="entry name" value="G_alpha"/>
    <property type="match status" value="1"/>
</dbReference>
<dbReference type="SUPFAM" id="SSF52540">
    <property type="entry name" value="P-loop containing nucleoside triphosphate hydrolases"/>
    <property type="match status" value="1"/>
</dbReference>
<dbReference type="SUPFAM" id="SSF47895">
    <property type="entry name" value="Transducin (alpha subunit), insertion domain"/>
    <property type="match status" value="1"/>
</dbReference>
<dbReference type="PROSITE" id="PS51882">
    <property type="entry name" value="G_ALPHA"/>
    <property type="match status" value="1"/>
</dbReference>
<comment type="function">
    <text>Guanine nucleotide-binding proteins (G proteins) are involved as modulators or transducers in various transmembrane signaling systems. Involved in conidiation.</text>
</comment>
<comment type="subunit">
    <text>G proteins are composed of 3 units; alpha, beta and gamma. The alpha chain contains the guanine nucleotide binding site.</text>
</comment>
<comment type="similarity">
    <text evidence="5">Belongs to the G-alpha family. G(q) subfamily.</text>
</comment>
<comment type="sequence caution" evidence="5">
    <conflict type="erroneous initiation">
        <sequence resource="EMBL-CDS" id="EAA32969"/>
    </conflict>
    <text>Extended N-terminus.</text>
</comment>
<reference key="1">
    <citation type="journal article" date="2000" name="Mol. Cell. Biol.">
        <title>Regulation of conidiation and adenylyl cyclase levels by the Galpha protein GNA-3 in Neurospora crassa.</title>
        <authorList>
            <person name="Kays A.M."/>
            <person name="Rowley P.S."/>
            <person name="Baasiri R.A."/>
            <person name="Borkovich K.A."/>
        </authorList>
    </citation>
    <scope>NUCLEOTIDE SEQUENCE [GENOMIC DNA]</scope>
    <source>
        <strain>ATCC 24698 / 74-OR23-1A / CBS 708.71 / DSM 1257 / FGSC 987</strain>
    </source>
</reference>
<reference key="2">
    <citation type="journal article" date="2003" name="Nature">
        <title>The genome sequence of the filamentous fungus Neurospora crassa.</title>
        <authorList>
            <person name="Galagan J.E."/>
            <person name="Calvo S.E."/>
            <person name="Borkovich K.A."/>
            <person name="Selker E.U."/>
            <person name="Read N.D."/>
            <person name="Jaffe D.B."/>
            <person name="FitzHugh W."/>
            <person name="Ma L.-J."/>
            <person name="Smirnov S."/>
            <person name="Purcell S."/>
            <person name="Rehman B."/>
            <person name="Elkins T."/>
            <person name="Engels R."/>
            <person name="Wang S."/>
            <person name="Nielsen C.B."/>
            <person name="Butler J."/>
            <person name="Endrizzi M."/>
            <person name="Qui D."/>
            <person name="Ianakiev P."/>
            <person name="Bell-Pedersen D."/>
            <person name="Nelson M.A."/>
            <person name="Werner-Washburne M."/>
            <person name="Selitrennikoff C.P."/>
            <person name="Kinsey J.A."/>
            <person name="Braun E.L."/>
            <person name="Zelter A."/>
            <person name="Schulte U."/>
            <person name="Kothe G.O."/>
            <person name="Jedd G."/>
            <person name="Mewes H.-W."/>
            <person name="Staben C."/>
            <person name="Marcotte E."/>
            <person name="Greenberg D."/>
            <person name="Roy A."/>
            <person name="Foley K."/>
            <person name="Naylor J."/>
            <person name="Stange-Thomann N."/>
            <person name="Barrett R."/>
            <person name="Gnerre S."/>
            <person name="Kamal M."/>
            <person name="Kamvysselis M."/>
            <person name="Mauceli E.W."/>
            <person name="Bielke C."/>
            <person name="Rudd S."/>
            <person name="Frishman D."/>
            <person name="Krystofova S."/>
            <person name="Rasmussen C."/>
            <person name="Metzenberg R.L."/>
            <person name="Perkins D.D."/>
            <person name="Kroken S."/>
            <person name="Cogoni C."/>
            <person name="Macino G."/>
            <person name="Catcheside D.E.A."/>
            <person name="Li W."/>
            <person name="Pratt R.J."/>
            <person name="Osmani S.A."/>
            <person name="DeSouza C.P.C."/>
            <person name="Glass N.L."/>
            <person name="Orbach M.J."/>
            <person name="Berglund J.A."/>
            <person name="Voelker R."/>
            <person name="Yarden O."/>
            <person name="Plamann M."/>
            <person name="Seiler S."/>
            <person name="Dunlap J.C."/>
            <person name="Radford A."/>
            <person name="Aramayo R."/>
            <person name="Natvig D.O."/>
            <person name="Alex L.A."/>
            <person name="Mannhaupt G."/>
            <person name="Ebbole D.J."/>
            <person name="Freitag M."/>
            <person name="Paulsen I."/>
            <person name="Sachs M.S."/>
            <person name="Lander E.S."/>
            <person name="Nusbaum C."/>
            <person name="Birren B.W."/>
        </authorList>
    </citation>
    <scope>NUCLEOTIDE SEQUENCE [LARGE SCALE GENOMIC DNA]</scope>
    <source>
        <strain>ATCC 24698 / 74-OR23-1A / CBS 708.71 / DSM 1257 / FGSC 987</strain>
    </source>
</reference>
<protein>
    <recommendedName>
        <fullName>Guanine nucleotide-binding protein alpha-3 subunit</fullName>
    </recommendedName>
    <alternativeName>
        <fullName>GP3-alpha</fullName>
    </alternativeName>
</protein>
<accession>Q9HFW7</accession>
<accession>Q7RVG2</accession>